<dbReference type="EC" id="7.4.2.11" evidence="1"/>
<dbReference type="EMBL" id="CP000135">
    <property type="protein sequence ID" value="ABC93201.1"/>
    <property type="molecule type" value="Genomic_DNA"/>
</dbReference>
<dbReference type="RefSeq" id="WP_011427621.1">
    <property type="nucleotide sequence ID" value="NC_007763.1"/>
</dbReference>
<dbReference type="SMR" id="Q2K284"/>
<dbReference type="KEGG" id="ret:RHE_PB00159"/>
<dbReference type="HOGENOM" id="CLU_000604_1_3_5"/>
<dbReference type="OrthoDB" id="9802264at2"/>
<dbReference type="Proteomes" id="UP000001936">
    <property type="component" value="Plasmid p42b"/>
</dbReference>
<dbReference type="GO" id="GO:0005886">
    <property type="term" value="C:plasma membrane"/>
    <property type="evidence" value="ECO:0007669"/>
    <property type="project" value="UniProtKB-SubCell"/>
</dbReference>
<dbReference type="GO" id="GO:0033232">
    <property type="term" value="F:ABC-type D-methionine transporter activity"/>
    <property type="evidence" value="ECO:0007669"/>
    <property type="project" value="UniProtKB-EC"/>
</dbReference>
<dbReference type="GO" id="GO:0005524">
    <property type="term" value="F:ATP binding"/>
    <property type="evidence" value="ECO:0007669"/>
    <property type="project" value="UniProtKB-KW"/>
</dbReference>
<dbReference type="GO" id="GO:0016887">
    <property type="term" value="F:ATP hydrolysis activity"/>
    <property type="evidence" value="ECO:0007669"/>
    <property type="project" value="InterPro"/>
</dbReference>
<dbReference type="CDD" id="cd03258">
    <property type="entry name" value="ABC_MetN_methionine_transporter"/>
    <property type="match status" value="1"/>
</dbReference>
<dbReference type="FunFam" id="3.40.50.300:FF:000056">
    <property type="entry name" value="Cell division ATP-binding protein FtsE"/>
    <property type="match status" value="1"/>
</dbReference>
<dbReference type="Gene3D" id="3.30.70.260">
    <property type="match status" value="1"/>
</dbReference>
<dbReference type="Gene3D" id="3.40.50.300">
    <property type="entry name" value="P-loop containing nucleotide triphosphate hydrolases"/>
    <property type="match status" value="1"/>
</dbReference>
<dbReference type="InterPro" id="IPR003593">
    <property type="entry name" value="AAA+_ATPase"/>
</dbReference>
<dbReference type="InterPro" id="IPR003439">
    <property type="entry name" value="ABC_transporter-like_ATP-bd"/>
</dbReference>
<dbReference type="InterPro" id="IPR017871">
    <property type="entry name" value="ABC_transporter-like_CS"/>
</dbReference>
<dbReference type="InterPro" id="IPR045865">
    <property type="entry name" value="ACT-like_dom_sf"/>
</dbReference>
<dbReference type="InterPro" id="IPR041701">
    <property type="entry name" value="MetN_ABC"/>
</dbReference>
<dbReference type="InterPro" id="IPR050086">
    <property type="entry name" value="MetN_ABC_transporter-like"/>
</dbReference>
<dbReference type="InterPro" id="IPR018449">
    <property type="entry name" value="NIL_domain"/>
</dbReference>
<dbReference type="InterPro" id="IPR027417">
    <property type="entry name" value="P-loop_NTPase"/>
</dbReference>
<dbReference type="PANTHER" id="PTHR43166">
    <property type="entry name" value="AMINO ACID IMPORT ATP-BINDING PROTEIN"/>
    <property type="match status" value="1"/>
</dbReference>
<dbReference type="PANTHER" id="PTHR43166:SF30">
    <property type="entry name" value="METHIONINE IMPORT ATP-BINDING PROTEIN METN"/>
    <property type="match status" value="1"/>
</dbReference>
<dbReference type="Pfam" id="PF00005">
    <property type="entry name" value="ABC_tran"/>
    <property type="match status" value="1"/>
</dbReference>
<dbReference type="Pfam" id="PF09383">
    <property type="entry name" value="NIL"/>
    <property type="match status" value="1"/>
</dbReference>
<dbReference type="SMART" id="SM00382">
    <property type="entry name" value="AAA"/>
    <property type="match status" value="1"/>
</dbReference>
<dbReference type="SMART" id="SM00930">
    <property type="entry name" value="NIL"/>
    <property type="match status" value="1"/>
</dbReference>
<dbReference type="SUPFAM" id="SSF55021">
    <property type="entry name" value="ACT-like"/>
    <property type="match status" value="1"/>
</dbReference>
<dbReference type="SUPFAM" id="SSF52540">
    <property type="entry name" value="P-loop containing nucleoside triphosphate hydrolases"/>
    <property type="match status" value="1"/>
</dbReference>
<dbReference type="PROSITE" id="PS00211">
    <property type="entry name" value="ABC_TRANSPORTER_1"/>
    <property type="match status" value="1"/>
</dbReference>
<dbReference type="PROSITE" id="PS50893">
    <property type="entry name" value="ABC_TRANSPORTER_2"/>
    <property type="match status" value="1"/>
</dbReference>
<dbReference type="PROSITE" id="PS51264">
    <property type="entry name" value="METN"/>
    <property type="match status" value="1"/>
</dbReference>
<feature type="chain" id="PRO_0000270363" description="Methionine import ATP-binding protein MetN">
    <location>
        <begin position="1"/>
        <end position="361"/>
    </location>
</feature>
<feature type="domain" description="ABC transporter" evidence="1">
    <location>
        <begin position="22"/>
        <end position="257"/>
    </location>
</feature>
<feature type="binding site" evidence="1">
    <location>
        <begin position="54"/>
        <end position="61"/>
    </location>
    <ligand>
        <name>ATP</name>
        <dbReference type="ChEBI" id="CHEBI:30616"/>
    </ligand>
</feature>
<evidence type="ECO:0000255" key="1">
    <source>
        <dbReference type="HAMAP-Rule" id="MF_01719"/>
    </source>
</evidence>
<keyword id="KW-0029">Amino-acid transport</keyword>
<keyword id="KW-0067">ATP-binding</keyword>
<keyword id="KW-0997">Cell inner membrane</keyword>
<keyword id="KW-1003">Cell membrane</keyword>
<keyword id="KW-0472">Membrane</keyword>
<keyword id="KW-0547">Nucleotide-binding</keyword>
<keyword id="KW-0614">Plasmid</keyword>
<keyword id="KW-1185">Reference proteome</keyword>
<keyword id="KW-1278">Translocase</keyword>
<keyword id="KW-0813">Transport</keyword>
<comment type="function">
    <text evidence="1">Part of the ABC transporter complex MetNIQ involved in methionine import. Responsible for energy coupling to the transport system.</text>
</comment>
<comment type="catalytic activity">
    <reaction evidence="1">
        <text>L-methionine(out) + ATP + H2O = L-methionine(in) + ADP + phosphate + H(+)</text>
        <dbReference type="Rhea" id="RHEA:29779"/>
        <dbReference type="ChEBI" id="CHEBI:15377"/>
        <dbReference type="ChEBI" id="CHEBI:15378"/>
        <dbReference type="ChEBI" id="CHEBI:30616"/>
        <dbReference type="ChEBI" id="CHEBI:43474"/>
        <dbReference type="ChEBI" id="CHEBI:57844"/>
        <dbReference type="ChEBI" id="CHEBI:456216"/>
        <dbReference type="EC" id="7.4.2.11"/>
    </reaction>
</comment>
<comment type="catalytic activity">
    <reaction evidence="1">
        <text>D-methionine(out) + ATP + H2O = D-methionine(in) + ADP + phosphate + H(+)</text>
        <dbReference type="Rhea" id="RHEA:29767"/>
        <dbReference type="ChEBI" id="CHEBI:15377"/>
        <dbReference type="ChEBI" id="CHEBI:15378"/>
        <dbReference type="ChEBI" id="CHEBI:30616"/>
        <dbReference type="ChEBI" id="CHEBI:43474"/>
        <dbReference type="ChEBI" id="CHEBI:57932"/>
        <dbReference type="ChEBI" id="CHEBI:456216"/>
        <dbReference type="EC" id="7.4.2.11"/>
    </reaction>
</comment>
<comment type="subunit">
    <text evidence="1">The complex is composed of two ATP-binding proteins (MetN), two transmembrane proteins (MetI) and a solute-binding protein (MetQ).</text>
</comment>
<comment type="subcellular location">
    <subcellularLocation>
        <location evidence="1">Cell inner membrane</location>
        <topology evidence="1">Peripheral membrane protein</topology>
    </subcellularLocation>
</comment>
<comment type="similarity">
    <text evidence="1">Belongs to the ABC transporter superfamily. Methionine importer (TC 3.A.1.24) family.</text>
</comment>
<sequence length="361" mass="38746">MNSVVTRAAIEPRPQAAAEEVVRLIDVKRRFGATPALDGISLNVNRGEILGIIGRSGAGKSTLIRCLNGLERADSGEIRIEGRDITGLQEQELQPLRGRIGMIFQHFNLLSAKTVEDNVALPLKIEGIAKAERLQRAHELLEVVGLADKAQAYPASLSGGQKQRVGIARALAARPALLLSDEATSALDPETTRSILALLRDINRKLGLTILLITHEMEVVRGIADRVAVIDAGRIVEEGQVWSVFANPQTDITRSLLGGIRPQLPDHILSRLSATTGSEVILSVDLAGPEAQGALFAELSAALPHSFRLVHGGIDHIQNQPVARFFIAVPAHEPALAGKVEQFLTARSARVEVLGYDTGHA</sequence>
<gene>
    <name evidence="1" type="primary">metN</name>
    <name type="ordered locus">RHE_PB00159</name>
</gene>
<proteinExistence type="inferred from homology"/>
<organism>
    <name type="scientific">Rhizobium etli (strain ATCC 51251 / DSM 11541 / JCM 21823 / NBRC 15573 / CFN 42)</name>
    <dbReference type="NCBI Taxonomy" id="347834"/>
    <lineage>
        <taxon>Bacteria</taxon>
        <taxon>Pseudomonadati</taxon>
        <taxon>Pseudomonadota</taxon>
        <taxon>Alphaproteobacteria</taxon>
        <taxon>Hyphomicrobiales</taxon>
        <taxon>Rhizobiaceae</taxon>
        <taxon>Rhizobium/Agrobacterium group</taxon>
        <taxon>Rhizobium</taxon>
    </lineage>
</organism>
<protein>
    <recommendedName>
        <fullName evidence="1">Methionine import ATP-binding protein MetN</fullName>
        <ecNumber evidence="1">7.4.2.11</ecNumber>
    </recommendedName>
</protein>
<geneLocation type="plasmid">
    <name>p42b</name>
</geneLocation>
<accession>Q2K284</accession>
<reference key="1">
    <citation type="journal article" date="2006" name="Proc. Natl. Acad. Sci. U.S.A.">
        <title>The partitioned Rhizobium etli genome: genetic and metabolic redundancy in seven interacting replicons.</title>
        <authorList>
            <person name="Gonzalez V."/>
            <person name="Santamaria R.I."/>
            <person name="Bustos P."/>
            <person name="Hernandez-Gonzalez I."/>
            <person name="Medrano-Soto A."/>
            <person name="Moreno-Hagelsieb G."/>
            <person name="Janga S.C."/>
            <person name="Ramirez M.A."/>
            <person name="Jimenez-Jacinto V."/>
            <person name="Collado-Vides J."/>
            <person name="Davila G."/>
        </authorList>
    </citation>
    <scope>NUCLEOTIDE SEQUENCE [LARGE SCALE GENOMIC DNA]</scope>
    <source>
        <strain>ATCC 51251 / DSM 11541 / JCM 21823 / NBRC 15573 / CFN 42</strain>
    </source>
</reference>
<name>METN_RHIEC</name>